<name>LACA_STRP7</name>
<proteinExistence type="inferred from homology"/>
<organism>
    <name type="scientific">Streptococcus pneumoniae (strain 70585)</name>
    <dbReference type="NCBI Taxonomy" id="488221"/>
    <lineage>
        <taxon>Bacteria</taxon>
        <taxon>Bacillati</taxon>
        <taxon>Bacillota</taxon>
        <taxon>Bacilli</taxon>
        <taxon>Lactobacillales</taxon>
        <taxon>Streptococcaceae</taxon>
        <taxon>Streptococcus</taxon>
    </lineage>
</organism>
<accession>C1C7G2</accession>
<comment type="catalytic activity">
    <reaction evidence="1">
        <text>aldehydo-D-galactose 6-phosphate = keto-D-tagatose 6-phosphate</text>
        <dbReference type="Rhea" id="RHEA:13033"/>
        <dbReference type="ChEBI" id="CHEBI:58255"/>
        <dbReference type="ChEBI" id="CHEBI:134283"/>
        <dbReference type="EC" id="5.3.1.26"/>
    </reaction>
</comment>
<comment type="pathway">
    <text evidence="1">Carbohydrate metabolism; D-galactose 6-phosphate degradation; D-tagatose 6-phosphate from D-galactose 6-phosphate: step 1/1.</text>
</comment>
<comment type="subunit">
    <text evidence="1">Heteromultimeric protein consisting of LacA and LacB.</text>
</comment>
<comment type="similarity">
    <text evidence="1">Belongs to the LacAB/RpiB family.</text>
</comment>
<reference key="1">
    <citation type="journal article" date="2010" name="Genome Biol.">
        <title>Structure and dynamics of the pan-genome of Streptococcus pneumoniae and closely related species.</title>
        <authorList>
            <person name="Donati C."/>
            <person name="Hiller N.L."/>
            <person name="Tettelin H."/>
            <person name="Muzzi A."/>
            <person name="Croucher N.J."/>
            <person name="Angiuoli S.V."/>
            <person name="Oggioni M."/>
            <person name="Dunning Hotopp J.C."/>
            <person name="Hu F.Z."/>
            <person name="Riley D.R."/>
            <person name="Covacci A."/>
            <person name="Mitchell T.J."/>
            <person name="Bentley S.D."/>
            <person name="Kilian M."/>
            <person name="Ehrlich G.D."/>
            <person name="Rappuoli R."/>
            <person name="Moxon E.R."/>
            <person name="Masignani V."/>
        </authorList>
    </citation>
    <scope>NUCLEOTIDE SEQUENCE [LARGE SCALE GENOMIC DNA]</scope>
    <source>
        <strain>70585</strain>
    </source>
</reference>
<keyword id="KW-0413">Isomerase</keyword>
<keyword id="KW-0423">Lactose metabolism</keyword>
<sequence>MSIVIGADAAGLRLKEVVKNFLEKENFHLVDVTAEGQDFVDVTLAVAAEVNKEEQNLGIVIDAYGAGPFMVATKIKGMVAAEVSDERSAYMTRGHNNSRMITMGAQLVGDELAKNIAKGFVNGKYDGGRHQIRVDMLNKMG</sequence>
<gene>
    <name evidence="1" type="primary">lacA</name>
    <name type="ordered locus">SP70585_1243</name>
</gene>
<evidence type="ECO:0000255" key="1">
    <source>
        <dbReference type="HAMAP-Rule" id="MF_01555"/>
    </source>
</evidence>
<dbReference type="EC" id="5.3.1.26" evidence="1"/>
<dbReference type="EMBL" id="CP000918">
    <property type="protein sequence ID" value="ACO17267.1"/>
    <property type="molecule type" value="Genomic_DNA"/>
</dbReference>
<dbReference type="RefSeq" id="WP_000029284.1">
    <property type="nucleotide sequence ID" value="NC_012468.1"/>
</dbReference>
<dbReference type="SMR" id="C1C7G2"/>
<dbReference type="KEGG" id="snm:SP70585_1243"/>
<dbReference type="HOGENOM" id="CLU_091396_4_2_9"/>
<dbReference type="UniPathway" id="UPA00702">
    <property type="reaction ID" value="UER00714"/>
</dbReference>
<dbReference type="Proteomes" id="UP000002211">
    <property type="component" value="Chromosome"/>
</dbReference>
<dbReference type="GO" id="GO:0050044">
    <property type="term" value="F:galactose-6-phosphate isomerase activity"/>
    <property type="evidence" value="ECO:0007669"/>
    <property type="project" value="UniProtKB-UniRule"/>
</dbReference>
<dbReference type="GO" id="GO:0004751">
    <property type="term" value="F:ribose-5-phosphate isomerase activity"/>
    <property type="evidence" value="ECO:0007669"/>
    <property type="project" value="TreeGrafter"/>
</dbReference>
<dbReference type="GO" id="GO:0019316">
    <property type="term" value="P:D-allose catabolic process"/>
    <property type="evidence" value="ECO:0007669"/>
    <property type="project" value="TreeGrafter"/>
</dbReference>
<dbReference type="GO" id="GO:0019388">
    <property type="term" value="P:galactose catabolic process"/>
    <property type="evidence" value="ECO:0007669"/>
    <property type="project" value="UniProtKB-UniPathway"/>
</dbReference>
<dbReference type="GO" id="GO:0019512">
    <property type="term" value="P:lactose catabolic process via tagatose-6-phosphate"/>
    <property type="evidence" value="ECO:0007669"/>
    <property type="project" value="UniProtKB-UniRule"/>
</dbReference>
<dbReference type="GO" id="GO:0009052">
    <property type="term" value="P:pentose-phosphate shunt, non-oxidative branch"/>
    <property type="evidence" value="ECO:0007669"/>
    <property type="project" value="TreeGrafter"/>
</dbReference>
<dbReference type="Gene3D" id="3.40.1400.10">
    <property type="entry name" value="Sugar-phosphate isomerase, RpiB/LacA/LacB"/>
    <property type="match status" value="1"/>
</dbReference>
<dbReference type="HAMAP" id="MF_01555">
    <property type="entry name" value="LacA"/>
    <property type="match status" value="1"/>
</dbReference>
<dbReference type="InterPro" id="IPR004783">
    <property type="entry name" value="LacA"/>
</dbReference>
<dbReference type="InterPro" id="IPR003500">
    <property type="entry name" value="RpiB_LacA_LacB"/>
</dbReference>
<dbReference type="InterPro" id="IPR036569">
    <property type="entry name" value="RpiB_LacA_LacB_sf"/>
</dbReference>
<dbReference type="NCBIfam" id="TIGR01118">
    <property type="entry name" value="lacA"/>
    <property type="match status" value="1"/>
</dbReference>
<dbReference type="NCBIfam" id="NF006380">
    <property type="entry name" value="PRK08621.1"/>
    <property type="match status" value="1"/>
</dbReference>
<dbReference type="NCBIfam" id="NF009257">
    <property type="entry name" value="PRK12613.1"/>
    <property type="match status" value="1"/>
</dbReference>
<dbReference type="NCBIfam" id="TIGR00689">
    <property type="entry name" value="rpiB_lacA_lacB"/>
    <property type="match status" value="1"/>
</dbReference>
<dbReference type="PANTHER" id="PTHR30345:SF5">
    <property type="entry name" value="GALACTOSE-6-PHOSPHATE ISOMERASE SUBUNIT LACA"/>
    <property type="match status" value="1"/>
</dbReference>
<dbReference type="PANTHER" id="PTHR30345">
    <property type="entry name" value="RIBOSE-5-PHOSPHATE ISOMERASE B"/>
    <property type="match status" value="1"/>
</dbReference>
<dbReference type="Pfam" id="PF02502">
    <property type="entry name" value="LacAB_rpiB"/>
    <property type="match status" value="1"/>
</dbReference>
<dbReference type="PIRSF" id="PIRSF005384">
    <property type="entry name" value="RpiB_LacA_B"/>
    <property type="match status" value="1"/>
</dbReference>
<dbReference type="SUPFAM" id="SSF89623">
    <property type="entry name" value="Ribose/Galactose isomerase RpiB/AlsB"/>
    <property type="match status" value="1"/>
</dbReference>
<feature type="chain" id="PRO_1000185397" description="Galactose-6-phosphate isomerase subunit LacA">
    <location>
        <begin position="1"/>
        <end position="141"/>
    </location>
</feature>
<protein>
    <recommendedName>
        <fullName evidence="1">Galactose-6-phosphate isomerase subunit LacA</fullName>
        <ecNumber evidence="1">5.3.1.26</ecNumber>
    </recommendedName>
</protein>